<gene>
    <name evidence="1" type="primary">thrS</name>
    <name type="ordered locus">MS1053</name>
</gene>
<feature type="chain" id="PRO_0000101005" description="Threonine--tRNA ligase">
    <location>
        <begin position="1"/>
        <end position="643"/>
    </location>
</feature>
<feature type="domain" description="TGS" evidence="2">
    <location>
        <begin position="1"/>
        <end position="61"/>
    </location>
</feature>
<feature type="region of interest" description="Catalytic" evidence="1">
    <location>
        <begin position="243"/>
        <end position="534"/>
    </location>
</feature>
<feature type="binding site" evidence="1">
    <location>
        <position position="334"/>
    </location>
    <ligand>
        <name>Zn(2+)</name>
        <dbReference type="ChEBI" id="CHEBI:29105"/>
    </ligand>
</feature>
<feature type="binding site" evidence="1">
    <location>
        <position position="385"/>
    </location>
    <ligand>
        <name>Zn(2+)</name>
        <dbReference type="ChEBI" id="CHEBI:29105"/>
    </ligand>
</feature>
<feature type="binding site" evidence="1">
    <location>
        <position position="511"/>
    </location>
    <ligand>
        <name>Zn(2+)</name>
        <dbReference type="ChEBI" id="CHEBI:29105"/>
    </ligand>
</feature>
<sequence>MPIITLPDGSQRQFDNPVSVLEVAQSIGAGLAKATIAGRVNGERRDACDMITEDSTLEIITAKDEDGLEIIRHSCAHLLGHAIKQLFPDVKMAIGPTIDNGFYYDVDLEHSLSQEDLDALEKRMLELAKTNYDVVKRRVSWQEARDTFEKRGEPYKMAILDENIAKDDHPALYHHEEYIDMCRGPHVPNMRFCHHFKLQKVAGAYWRGDSKNKMLQRIYGTAWADKKQLNEYLTRLEEAAKRDHRKIGKALDLYHMQEEAPGMVFWHNDGWTIFRELETFVRTKLKEYDYQEVKGPFMMDRVLWEKTGHWQNYGDLMFTTQSENREYAIKPMNCPGHVQIFNQGLKSYRDLPIRMAEFGSCHRNEPSGSLHGLMRVRGFTQDDAHIFCTEDQIESEVTSCIRMVYDIYSTFGFTNIAVKLSTRPENRIGDDAMWDRAEQGLANALAHNGLQYEIQEGEGAFYGPKIEFALRDCLDREWQCGTVQLDFALPGRLNASYVAEDNDRRTPVMIHRAILGSIERFIGIITEEYAGFFPSWLAPVQAVVMNITDSQAEYVQKVTKTLSDAGLRVKSDLRNEKVGFKVREHTLRRVPYMLVCGDKEISEGKVSVRTRRGADLGTYSVEEFVEILKNQVRSRELKLLGEE</sequence>
<comment type="function">
    <text evidence="1">Catalyzes the attachment of threonine to tRNA(Thr) in a two-step reaction: L-threonine is first activated by ATP to form Thr-AMP and then transferred to the acceptor end of tRNA(Thr). Also edits incorrectly charged L-seryl-tRNA(Thr).</text>
</comment>
<comment type="catalytic activity">
    <reaction evidence="1">
        <text>tRNA(Thr) + L-threonine + ATP = L-threonyl-tRNA(Thr) + AMP + diphosphate + H(+)</text>
        <dbReference type="Rhea" id="RHEA:24624"/>
        <dbReference type="Rhea" id="RHEA-COMP:9670"/>
        <dbReference type="Rhea" id="RHEA-COMP:9704"/>
        <dbReference type="ChEBI" id="CHEBI:15378"/>
        <dbReference type="ChEBI" id="CHEBI:30616"/>
        <dbReference type="ChEBI" id="CHEBI:33019"/>
        <dbReference type="ChEBI" id="CHEBI:57926"/>
        <dbReference type="ChEBI" id="CHEBI:78442"/>
        <dbReference type="ChEBI" id="CHEBI:78534"/>
        <dbReference type="ChEBI" id="CHEBI:456215"/>
        <dbReference type="EC" id="6.1.1.3"/>
    </reaction>
</comment>
<comment type="cofactor">
    <cofactor evidence="1">
        <name>Zn(2+)</name>
        <dbReference type="ChEBI" id="CHEBI:29105"/>
    </cofactor>
    <text evidence="1">Binds 1 zinc ion per subunit.</text>
</comment>
<comment type="subunit">
    <text evidence="1">Homodimer.</text>
</comment>
<comment type="subcellular location">
    <subcellularLocation>
        <location evidence="1">Cytoplasm</location>
    </subcellularLocation>
</comment>
<comment type="similarity">
    <text evidence="1">Belongs to the class-II aminoacyl-tRNA synthetase family.</text>
</comment>
<name>SYT_MANSM</name>
<proteinExistence type="inferred from homology"/>
<dbReference type="EC" id="6.1.1.3" evidence="1"/>
<dbReference type="EMBL" id="AE016827">
    <property type="protein sequence ID" value="AAU37660.1"/>
    <property type="molecule type" value="Genomic_DNA"/>
</dbReference>
<dbReference type="RefSeq" id="WP_011200229.1">
    <property type="nucleotide sequence ID" value="NC_006300.1"/>
</dbReference>
<dbReference type="SMR" id="Q65TQ0"/>
<dbReference type="STRING" id="221988.MS1053"/>
<dbReference type="KEGG" id="msu:MS1053"/>
<dbReference type="eggNOG" id="COG0441">
    <property type="taxonomic scope" value="Bacteria"/>
</dbReference>
<dbReference type="HOGENOM" id="CLU_008554_0_1_6"/>
<dbReference type="OrthoDB" id="9802304at2"/>
<dbReference type="Proteomes" id="UP000000607">
    <property type="component" value="Chromosome"/>
</dbReference>
<dbReference type="GO" id="GO:0005829">
    <property type="term" value="C:cytosol"/>
    <property type="evidence" value="ECO:0007669"/>
    <property type="project" value="TreeGrafter"/>
</dbReference>
<dbReference type="GO" id="GO:0005524">
    <property type="term" value="F:ATP binding"/>
    <property type="evidence" value="ECO:0007669"/>
    <property type="project" value="UniProtKB-UniRule"/>
</dbReference>
<dbReference type="GO" id="GO:0046872">
    <property type="term" value="F:metal ion binding"/>
    <property type="evidence" value="ECO:0007669"/>
    <property type="project" value="UniProtKB-KW"/>
</dbReference>
<dbReference type="GO" id="GO:0004829">
    <property type="term" value="F:threonine-tRNA ligase activity"/>
    <property type="evidence" value="ECO:0007669"/>
    <property type="project" value="UniProtKB-UniRule"/>
</dbReference>
<dbReference type="GO" id="GO:0000049">
    <property type="term" value="F:tRNA binding"/>
    <property type="evidence" value="ECO:0007669"/>
    <property type="project" value="UniProtKB-KW"/>
</dbReference>
<dbReference type="GO" id="GO:0006435">
    <property type="term" value="P:threonyl-tRNA aminoacylation"/>
    <property type="evidence" value="ECO:0007669"/>
    <property type="project" value="UniProtKB-UniRule"/>
</dbReference>
<dbReference type="CDD" id="cd01667">
    <property type="entry name" value="TGS_ThrRS"/>
    <property type="match status" value="1"/>
</dbReference>
<dbReference type="CDD" id="cd00860">
    <property type="entry name" value="ThrRS_anticodon"/>
    <property type="match status" value="1"/>
</dbReference>
<dbReference type="CDD" id="cd00771">
    <property type="entry name" value="ThrRS_core"/>
    <property type="match status" value="1"/>
</dbReference>
<dbReference type="FunFam" id="3.10.20.30:FF:000005">
    <property type="entry name" value="Threonine--tRNA ligase"/>
    <property type="match status" value="1"/>
</dbReference>
<dbReference type="FunFam" id="3.30.54.20:FF:000002">
    <property type="entry name" value="Threonine--tRNA ligase"/>
    <property type="match status" value="1"/>
</dbReference>
<dbReference type="FunFam" id="3.30.930.10:FF:000002">
    <property type="entry name" value="Threonine--tRNA ligase"/>
    <property type="match status" value="1"/>
</dbReference>
<dbReference type="FunFam" id="3.40.50.800:FF:000001">
    <property type="entry name" value="Threonine--tRNA ligase"/>
    <property type="match status" value="1"/>
</dbReference>
<dbReference type="FunFam" id="3.30.980.10:FF:000005">
    <property type="entry name" value="Threonyl-tRNA synthetase, mitochondrial"/>
    <property type="match status" value="1"/>
</dbReference>
<dbReference type="Gene3D" id="3.10.20.30">
    <property type="match status" value="1"/>
</dbReference>
<dbReference type="Gene3D" id="3.30.54.20">
    <property type="match status" value="1"/>
</dbReference>
<dbReference type="Gene3D" id="3.40.50.800">
    <property type="entry name" value="Anticodon-binding domain"/>
    <property type="match status" value="1"/>
</dbReference>
<dbReference type="Gene3D" id="3.30.930.10">
    <property type="entry name" value="Bira Bifunctional Protein, Domain 2"/>
    <property type="match status" value="1"/>
</dbReference>
<dbReference type="Gene3D" id="3.30.980.10">
    <property type="entry name" value="Threonyl-trna Synthetase, Chain A, domain 2"/>
    <property type="match status" value="1"/>
</dbReference>
<dbReference type="HAMAP" id="MF_00184">
    <property type="entry name" value="Thr_tRNA_synth"/>
    <property type="match status" value="1"/>
</dbReference>
<dbReference type="InterPro" id="IPR002314">
    <property type="entry name" value="aa-tRNA-synt_IIb"/>
</dbReference>
<dbReference type="InterPro" id="IPR006195">
    <property type="entry name" value="aa-tRNA-synth_II"/>
</dbReference>
<dbReference type="InterPro" id="IPR045864">
    <property type="entry name" value="aa-tRNA-synth_II/BPL/LPL"/>
</dbReference>
<dbReference type="InterPro" id="IPR004154">
    <property type="entry name" value="Anticodon-bd"/>
</dbReference>
<dbReference type="InterPro" id="IPR036621">
    <property type="entry name" value="Anticodon-bd_dom_sf"/>
</dbReference>
<dbReference type="InterPro" id="IPR012675">
    <property type="entry name" value="Beta-grasp_dom_sf"/>
</dbReference>
<dbReference type="InterPro" id="IPR004095">
    <property type="entry name" value="TGS"/>
</dbReference>
<dbReference type="InterPro" id="IPR012676">
    <property type="entry name" value="TGS-like"/>
</dbReference>
<dbReference type="InterPro" id="IPR002320">
    <property type="entry name" value="Thr-tRNA-ligase_IIa"/>
</dbReference>
<dbReference type="InterPro" id="IPR018163">
    <property type="entry name" value="Thr/Ala-tRNA-synth_IIc_edit"/>
</dbReference>
<dbReference type="InterPro" id="IPR047246">
    <property type="entry name" value="ThrRS_anticodon"/>
</dbReference>
<dbReference type="InterPro" id="IPR033728">
    <property type="entry name" value="ThrRS_core"/>
</dbReference>
<dbReference type="InterPro" id="IPR012947">
    <property type="entry name" value="tRNA_SAD"/>
</dbReference>
<dbReference type="NCBIfam" id="TIGR00418">
    <property type="entry name" value="thrS"/>
    <property type="match status" value="1"/>
</dbReference>
<dbReference type="PANTHER" id="PTHR11451:SF44">
    <property type="entry name" value="THREONINE--TRNA LIGASE, CHLOROPLASTIC_MITOCHONDRIAL 2"/>
    <property type="match status" value="1"/>
</dbReference>
<dbReference type="PANTHER" id="PTHR11451">
    <property type="entry name" value="THREONINE-TRNA LIGASE"/>
    <property type="match status" value="1"/>
</dbReference>
<dbReference type="Pfam" id="PF03129">
    <property type="entry name" value="HGTP_anticodon"/>
    <property type="match status" value="1"/>
</dbReference>
<dbReference type="Pfam" id="PF02824">
    <property type="entry name" value="TGS"/>
    <property type="match status" value="1"/>
</dbReference>
<dbReference type="Pfam" id="PF00587">
    <property type="entry name" value="tRNA-synt_2b"/>
    <property type="match status" value="1"/>
</dbReference>
<dbReference type="Pfam" id="PF07973">
    <property type="entry name" value="tRNA_SAD"/>
    <property type="match status" value="1"/>
</dbReference>
<dbReference type="PRINTS" id="PR01047">
    <property type="entry name" value="TRNASYNTHTHR"/>
</dbReference>
<dbReference type="SMART" id="SM00863">
    <property type="entry name" value="tRNA_SAD"/>
    <property type="match status" value="1"/>
</dbReference>
<dbReference type="SUPFAM" id="SSF52954">
    <property type="entry name" value="Class II aaRS ABD-related"/>
    <property type="match status" value="1"/>
</dbReference>
<dbReference type="SUPFAM" id="SSF55681">
    <property type="entry name" value="Class II aaRS and biotin synthetases"/>
    <property type="match status" value="1"/>
</dbReference>
<dbReference type="SUPFAM" id="SSF81271">
    <property type="entry name" value="TGS-like"/>
    <property type="match status" value="1"/>
</dbReference>
<dbReference type="SUPFAM" id="SSF55186">
    <property type="entry name" value="ThrRS/AlaRS common domain"/>
    <property type="match status" value="1"/>
</dbReference>
<dbReference type="PROSITE" id="PS50862">
    <property type="entry name" value="AA_TRNA_LIGASE_II"/>
    <property type="match status" value="1"/>
</dbReference>
<dbReference type="PROSITE" id="PS51880">
    <property type="entry name" value="TGS"/>
    <property type="match status" value="1"/>
</dbReference>
<reference key="1">
    <citation type="journal article" date="2004" name="Nat. Biotechnol.">
        <title>The genome sequence of the capnophilic rumen bacterium Mannheimia succiniciproducens.</title>
        <authorList>
            <person name="Hong S.H."/>
            <person name="Kim J.S."/>
            <person name="Lee S.Y."/>
            <person name="In Y.H."/>
            <person name="Choi S.S."/>
            <person name="Rih J.-K."/>
            <person name="Kim C.H."/>
            <person name="Jeong H."/>
            <person name="Hur C.G."/>
            <person name="Kim J.J."/>
        </authorList>
    </citation>
    <scope>NUCLEOTIDE SEQUENCE [LARGE SCALE GENOMIC DNA]</scope>
    <source>
        <strain>KCTC 0769BP / MBEL55E</strain>
    </source>
</reference>
<evidence type="ECO:0000255" key="1">
    <source>
        <dbReference type="HAMAP-Rule" id="MF_00184"/>
    </source>
</evidence>
<evidence type="ECO:0000255" key="2">
    <source>
        <dbReference type="PROSITE-ProRule" id="PRU01228"/>
    </source>
</evidence>
<protein>
    <recommendedName>
        <fullName evidence="1">Threonine--tRNA ligase</fullName>
        <ecNumber evidence="1">6.1.1.3</ecNumber>
    </recommendedName>
    <alternativeName>
        <fullName evidence="1">Threonyl-tRNA synthetase</fullName>
        <shortName evidence="1">ThrRS</shortName>
    </alternativeName>
</protein>
<organism>
    <name type="scientific">Mannheimia succiniciproducens (strain KCTC 0769BP / MBEL55E)</name>
    <dbReference type="NCBI Taxonomy" id="221988"/>
    <lineage>
        <taxon>Bacteria</taxon>
        <taxon>Pseudomonadati</taxon>
        <taxon>Pseudomonadota</taxon>
        <taxon>Gammaproteobacteria</taxon>
        <taxon>Pasteurellales</taxon>
        <taxon>Pasteurellaceae</taxon>
        <taxon>Basfia</taxon>
    </lineage>
</organism>
<keyword id="KW-0030">Aminoacyl-tRNA synthetase</keyword>
<keyword id="KW-0067">ATP-binding</keyword>
<keyword id="KW-0963">Cytoplasm</keyword>
<keyword id="KW-0436">Ligase</keyword>
<keyword id="KW-0479">Metal-binding</keyword>
<keyword id="KW-0547">Nucleotide-binding</keyword>
<keyword id="KW-0648">Protein biosynthesis</keyword>
<keyword id="KW-0694">RNA-binding</keyword>
<keyword id="KW-0820">tRNA-binding</keyword>
<keyword id="KW-0862">Zinc</keyword>
<accession>Q65TQ0</accession>